<proteinExistence type="inferred from homology"/>
<accession>Q2IS49</accession>
<sequence length="248" mass="26911">MAGHSQFKNIMHRKGKQDAQRSKAFSKLAREITVAAKLGTPDPAMNPRLRAAVIAARAENMPKDNIERAIKKAIGGDSENYDEIRYEGYGPGGVAVIVEALTDNRNRAASDIRSFFTKSGGNLGETGSVSFMFDRTGVIEYDADKASADDMLEAAIEAGADDVASSESGHEVYASQDTFRDVAKALEAKFGEARKAALIWKPQNTVAVDDETGEKLFKLMDHLNDHDDVQNVYANFEVSDALMAKMAG</sequence>
<keyword id="KW-0963">Cytoplasm</keyword>
<keyword id="KW-0238">DNA-binding</keyword>
<keyword id="KW-1185">Reference proteome</keyword>
<keyword id="KW-0804">Transcription</keyword>
<keyword id="KW-0805">Transcription regulation</keyword>
<gene>
    <name type="ordered locus">RPB_4273</name>
</gene>
<evidence type="ECO:0000255" key="1">
    <source>
        <dbReference type="HAMAP-Rule" id="MF_00693"/>
    </source>
</evidence>
<evidence type="ECO:0000256" key="2">
    <source>
        <dbReference type="SAM" id="MobiDB-lite"/>
    </source>
</evidence>
<protein>
    <recommendedName>
        <fullName evidence="1">Probable transcriptional regulatory protein RPB_4273</fullName>
    </recommendedName>
</protein>
<comment type="subcellular location">
    <subcellularLocation>
        <location evidence="1">Cytoplasm</location>
    </subcellularLocation>
</comment>
<comment type="similarity">
    <text evidence="1">Belongs to the TACO1 family.</text>
</comment>
<dbReference type="EMBL" id="CP000250">
    <property type="protein sequence ID" value="ABD08961.1"/>
    <property type="molecule type" value="Genomic_DNA"/>
</dbReference>
<dbReference type="RefSeq" id="WP_011443145.1">
    <property type="nucleotide sequence ID" value="NC_007778.1"/>
</dbReference>
<dbReference type="SMR" id="Q2IS49"/>
<dbReference type="STRING" id="316058.RPB_4273"/>
<dbReference type="KEGG" id="rpb:RPB_4273"/>
<dbReference type="eggNOG" id="COG0217">
    <property type="taxonomic scope" value="Bacteria"/>
</dbReference>
<dbReference type="HOGENOM" id="CLU_062974_2_2_5"/>
<dbReference type="OrthoDB" id="9781053at2"/>
<dbReference type="Proteomes" id="UP000008809">
    <property type="component" value="Chromosome"/>
</dbReference>
<dbReference type="GO" id="GO:0005829">
    <property type="term" value="C:cytosol"/>
    <property type="evidence" value="ECO:0007669"/>
    <property type="project" value="TreeGrafter"/>
</dbReference>
<dbReference type="GO" id="GO:0003677">
    <property type="term" value="F:DNA binding"/>
    <property type="evidence" value="ECO:0007669"/>
    <property type="project" value="UniProtKB-UniRule"/>
</dbReference>
<dbReference type="GO" id="GO:0006355">
    <property type="term" value="P:regulation of DNA-templated transcription"/>
    <property type="evidence" value="ECO:0007669"/>
    <property type="project" value="UniProtKB-UniRule"/>
</dbReference>
<dbReference type="FunFam" id="1.10.10.200:FF:000002">
    <property type="entry name" value="Probable transcriptional regulatory protein CLM62_37755"/>
    <property type="match status" value="1"/>
</dbReference>
<dbReference type="Gene3D" id="1.10.10.200">
    <property type="match status" value="1"/>
</dbReference>
<dbReference type="Gene3D" id="3.30.70.980">
    <property type="match status" value="2"/>
</dbReference>
<dbReference type="HAMAP" id="MF_00693">
    <property type="entry name" value="Transcrip_reg_TACO1"/>
    <property type="match status" value="1"/>
</dbReference>
<dbReference type="InterPro" id="IPR017856">
    <property type="entry name" value="Integrase-like_N"/>
</dbReference>
<dbReference type="InterPro" id="IPR048300">
    <property type="entry name" value="TACO1_YebC-like_2nd/3rd_dom"/>
</dbReference>
<dbReference type="InterPro" id="IPR049083">
    <property type="entry name" value="TACO1_YebC_N"/>
</dbReference>
<dbReference type="InterPro" id="IPR002876">
    <property type="entry name" value="Transcrip_reg_TACO1-like"/>
</dbReference>
<dbReference type="InterPro" id="IPR026564">
    <property type="entry name" value="Transcrip_reg_TACO1-like_dom3"/>
</dbReference>
<dbReference type="InterPro" id="IPR029072">
    <property type="entry name" value="YebC-like"/>
</dbReference>
<dbReference type="NCBIfam" id="NF001030">
    <property type="entry name" value="PRK00110.1"/>
    <property type="match status" value="1"/>
</dbReference>
<dbReference type="NCBIfam" id="NF009044">
    <property type="entry name" value="PRK12378.1"/>
    <property type="match status" value="1"/>
</dbReference>
<dbReference type="NCBIfam" id="TIGR01033">
    <property type="entry name" value="YebC/PmpR family DNA-binding transcriptional regulator"/>
    <property type="match status" value="1"/>
</dbReference>
<dbReference type="PANTHER" id="PTHR12532:SF6">
    <property type="entry name" value="TRANSCRIPTIONAL REGULATORY PROTEIN YEBC-RELATED"/>
    <property type="match status" value="1"/>
</dbReference>
<dbReference type="PANTHER" id="PTHR12532">
    <property type="entry name" value="TRANSLATIONAL ACTIVATOR OF CYTOCHROME C OXIDASE 1"/>
    <property type="match status" value="1"/>
</dbReference>
<dbReference type="Pfam" id="PF20772">
    <property type="entry name" value="TACO1_YebC_N"/>
    <property type="match status" value="1"/>
</dbReference>
<dbReference type="Pfam" id="PF01709">
    <property type="entry name" value="Transcrip_reg"/>
    <property type="match status" value="1"/>
</dbReference>
<dbReference type="SUPFAM" id="SSF75625">
    <property type="entry name" value="YebC-like"/>
    <property type="match status" value="1"/>
</dbReference>
<organism>
    <name type="scientific">Rhodopseudomonas palustris (strain HaA2)</name>
    <dbReference type="NCBI Taxonomy" id="316058"/>
    <lineage>
        <taxon>Bacteria</taxon>
        <taxon>Pseudomonadati</taxon>
        <taxon>Pseudomonadota</taxon>
        <taxon>Alphaproteobacteria</taxon>
        <taxon>Hyphomicrobiales</taxon>
        <taxon>Nitrobacteraceae</taxon>
        <taxon>Rhodopseudomonas</taxon>
    </lineage>
</organism>
<reference key="1">
    <citation type="submission" date="2006-01" db="EMBL/GenBank/DDBJ databases">
        <title>Complete sequence of Rhodopseudomonas palustris HaA2.</title>
        <authorList>
            <consortium name="US DOE Joint Genome Institute"/>
            <person name="Copeland A."/>
            <person name="Lucas S."/>
            <person name="Lapidus A."/>
            <person name="Barry K."/>
            <person name="Detter J.C."/>
            <person name="Glavina T."/>
            <person name="Hammon N."/>
            <person name="Israni S."/>
            <person name="Pitluck S."/>
            <person name="Chain P."/>
            <person name="Malfatti S."/>
            <person name="Shin M."/>
            <person name="Vergez L."/>
            <person name="Schmutz J."/>
            <person name="Larimer F."/>
            <person name="Land M."/>
            <person name="Hauser L."/>
            <person name="Pelletier D.A."/>
            <person name="Kyrpides N."/>
            <person name="Anderson I."/>
            <person name="Oda Y."/>
            <person name="Harwood C.S."/>
            <person name="Richardson P."/>
        </authorList>
    </citation>
    <scope>NUCLEOTIDE SEQUENCE [LARGE SCALE GENOMIC DNA]</scope>
    <source>
        <strain>HaA2</strain>
    </source>
</reference>
<feature type="chain" id="PRO_0000257118" description="Probable transcriptional regulatory protein RPB_4273">
    <location>
        <begin position="1"/>
        <end position="248"/>
    </location>
</feature>
<feature type="region of interest" description="Disordered" evidence="2">
    <location>
        <begin position="1"/>
        <end position="22"/>
    </location>
</feature>
<name>Y4273_RHOP2</name>